<protein>
    <recommendedName>
        <fullName evidence="1">Glutaminase</fullName>
        <ecNumber evidence="1">3.5.1.2</ecNumber>
    </recommendedName>
</protein>
<dbReference type="EC" id="3.5.1.2" evidence="1"/>
<dbReference type="EMBL" id="CU207366">
    <property type="protein sequence ID" value="CAL67686.1"/>
    <property type="molecule type" value="Genomic_DNA"/>
</dbReference>
<dbReference type="RefSeq" id="WP_011710589.1">
    <property type="nucleotide sequence ID" value="NC_008571.1"/>
</dbReference>
<dbReference type="SMR" id="A0M4Z1"/>
<dbReference type="STRING" id="411154.GFO_2730"/>
<dbReference type="KEGG" id="gfo:GFO_2730"/>
<dbReference type="eggNOG" id="COG2066">
    <property type="taxonomic scope" value="Bacteria"/>
</dbReference>
<dbReference type="HOGENOM" id="CLU_027932_1_1_10"/>
<dbReference type="OrthoDB" id="9788822at2"/>
<dbReference type="Proteomes" id="UP000000755">
    <property type="component" value="Chromosome"/>
</dbReference>
<dbReference type="GO" id="GO:0004359">
    <property type="term" value="F:glutaminase activity"/>
    <property type="evidence" value="ECO:0007669"/>
    <property type="project" value="UniProtKB-UniRule"/>
</dbReference>
<dbReference type="GO" id="GO:0006537">
    <property type="term" value="P:glutamate biosynthetic process"/>
    <property type="evidence" value="ECO:0007669"/>
    <property type="project" value="TreeGrafter"/>
</dbReference>
<dbReference type="GO" id="GO:0006543">
    <property type="term" value="P:glutamine catabolic process"/>
    <property type="evidence" value="ECO:0007669"/>
    <property type="project" value="TreeGrafter"/>
</dbReference>
<dbReference type="FunFam" id="3.40.710.10:FF:000005">
    <property type="entry name" value="Glutaminase"/>
    <property type="match status" value="1"/>
</dbReference>
<dbReference type="Gene3D" id="3.40.710.10">
    <property type="entry name" value="DD-peptidase/beta-lactamase superfamily"/>
    <property type="match status" value="1"/>
</dbReference>
<dbReference type="HAMAP" id="MF_00313">
    <property type="entry name" value="Glutaminase"/>
    <property type="match status" value="1"/>
</dbReference>
<dbReference type="InterPro" id="IPR012338">
    <property type="entry name" value="Beta-lactam/transpept-like"/>
</dbReference>
<dbReference type="InterPro" id="IPR015868">
    <property type="entry name" value="Glutaminase"/>
</dbReference>
<dbReference type="NCBIfam" id="TIGR03814">
    <property type="entry name" value="Gln_ase"/>
    <property type="match status" value="1"/>
</dbReference>
<dbReference type="NCBIfam" id="NF002133">
    <property type="entry name" value="PRK00971.1-2"/>
    <property type="match status" value="1"/>
</dbReference>
<dbReference type="PANTHER" id="PTHR12544">
    <property type="entry name" value="GLUTAMINASE"/>
    <property type="match status" value="1"/>
</dbReference>
<dbReference type="PANTHER" id="PTHR12544:SF29">
    <property type="entry name" value="GLUTAMINASE"/>
    <property type="match status" value="1"/>
</dbReference>
<dbReference type="Pfam" id="PF04960">
    <property type="entry name" value="Glutaminase"/>
    <property type="match status" value="1"/>
</dbReference>
<dbReference type="SUPFAM" id="SSF56601">
    <property type="entry name" value="beta-lactamase/transpeptidase-like"/>
    <property type="match status" value="1"/>
</dbReference>
<name>GLSA_CHRFK</name>
<evidence type="ECO:0000255" key="1">
    <source>
        <dbReference type="HAMAP-Rule" id="MF_00313"/>
    </source>
</evidence>
<accession>A0M4Z1</accession>
<gene>
    <name evidence="1" type="primary">glsA</name>
    <name type="ordered locus">GFO_2730</name>
</gene>
<proteinExistence type="inferred from homology"/>
<sequence>MDYQQILDTINDEMSYRDVTGKVASYIPELAKVDRRKFGMHVYCGDQQHFSFGDSEENFSIQSISKVFTLAMAMRLMGEDLWDRLDVEPSGDPFNSLTQLEYESGIPRNPFINAGALVISDILVDQLEDPKKELLEFVRKITGDDNIHYNETVAASEKSTGYRNIALVNYIKALGNIKCDVEPIVDFYFYQCSLAMSCSQLSKAFMIFANKGRILETDEKILKPKTVKRINALMQTCGFYDEAGEFSFQVGMPGKSGVGGGIVAIHPDNYSVAVWSPILNENGNSELGMKALERFTTLTGVSVF</sequence>
<comment type="catalytic activity">
    <reaction evidence="1">
        <text>L-glutamine + H2O = L-glutamate + NH4(+)</text>
        <dbReference type="Rhea" id="RHEA:15889"/>
        <dbReference type="ChEBI" id="CHEBI:15377"/>
        <dbReference type="ChEBI" id="CHEBI:28938"/>
        <dbReference type="ChEBI" id="CHEBI:29985"/>
        <dbReference type="ChEBI" id="CHEBI:58359"/>
        <dbReference type="EC" id="3.5.1.2"/>
    </reaction>
</comment>
<comment type="subunit">
    <text evidence="1">Homotetramer.</text>
</comment>
<comment type="similarity">
    <text evidence="1">Belongs to the glutaminase family.</text>
</comment>
<organism>
    <name type="scientific">Christiangramia forsetii (strain DSM 17595 / CGMCC 1.15422 / KT0803)</name>
    <name type="common">Gramella forsetii</name>
    <dbReference type="NCBI Taxonomy" id="411154"/>
    <lineage>
        <taxon>Bacteria</taxon>
        <taxon>Pseudomonadati</taxon>
        <taxon>Bacteroidota</taxon>
        <taxon>Flavobacteriia</taxon>
        <taxon>Flavobacteriales</taxon>
        <taxon>Flavobacteriaceae</taxon>
        <taxon>Christiangramia</taxon>
    </lineage>
</organism>
<keyword id="KW-0378">Hydrolase</keyword>
<feature type="chain" id="PRO_0000336028" description="Glutaminase">
    <location>
        <begin position="1"/>
        <end position="304"/>
    </location>
</feature>
<feature type="binding site" evidence="1">
    <location>
        <position position="63"/>
    </location>
    <ligand>
        <name>substrate</name>
    </ligand>
</feature>
<feature type="binding site" evidence="1">
    <location>
        <position position="113"/>
    </location>
    <ligand>
        <name>substrate</name>
    </ligand>
</feature>
<feature type="binding site" evidence="1">
    <location>
        <position position="157"/>
    </location>
    <ligand>
        <name>substrate</name>
    </ligand>
</feature>
<feature type="binding site" evidence="1">
    <location>
        <position position="164"/>
    </location>
    <ligand>
        <name>substrate</name>
    </ligand>
</feature>
<feature type="binding site" evidence="1">
    <location>
        <position position="188"/>
    </location>
    <ligand>
        <name>substrate</name>
    </ligand>
</feature>
<feature type="binding site" evidence="1">
    <location>
        <position position="240"/>
    </location>
    <ligand>
        <name>substrate</name>
    </ligand>
</feature>
<feature type="binding site" evidence="1">
    <location>
        <position position="258"/>
    </location>
    <ligand>
        <name>substrate</name>
    </ligand>
</feature>
<reference key="1">
    <citation type="journal article" date="2006" name="Environ. Microbiol.">
        <title>Whole genome analysis of the marine Bacteroidetes'Gramella forsetii' reveals adaptations to degradation of polymeric organic matter.</title>
        <authorList>
            <person name="Bauer M."/>
            <person name="Kube M."/>
            <person name="Teeling H."/>
            <person name="Richter M."/>
            <person name="Lombardot T."/>
            <person name="Allers E."/>
            <person name="Wuerdemann C.A."/>
            <person name="Quast C."/>
            <person name="Kuhl H."/>
            <person name="Knaust F."/>
            <person name="Woebken D."/>
            <person name="Bischof K."/>
            <person name="Mussmann M."/>
            <person name="Choudhuri J.V."/>
            <person name="Meyer F."/>
            <person name="Reinhardt R."/>
            <person name="Amann R.I."/>
            <person name="Gloeckner F.O."/>
        </authorList>
    </citation>
    <scope>NUCLEOTIDE SEQUENCE [LARGE SCALE GENOMIC DNA]</scope>
    <source>
        <strain>DSM 17595 / CGMCC 1.15422 / KT0803</strain>
    </source>
</reference>